<organism>
    <name type="scientific">Yersinia pestis bv. Antiqua (strain Angola)</name>
    <dbReference type="NCBI Taxonomy" id="349746"/>
    <lineage>
        <taxon>Bacteria</taxon>
        <taxon>Pseudomonadati</taxon>
        <taxon>Pseudomonadota</taxon>
        <taxon>Gammaproteobacteria</taxon>
        <taxon>Enterobacterales</taxon>
        <taxon>Yersiniaceae</taxon>
        <taxon>Yersinia</taxon>
    </lineage>
</organism>
<comment type="function">
    <text evidence="1">Catalyzes the attachment of proline to tRNA(Pro) in a two-step reaction: proline is first activated by ATP to form Pro-AMP and then transferred to the acceptor end of tRNA(Pro). As ProRS can inadvertently accommodate and process non-cognate amino acids such as alanine and cysteine, to avoid such errors it has two additional distinct editing activities against alanine. One activity is designated as 'pretransfer' editing and involves the tRNA(Pro)-independent hydrolysis of activated Ala-AMP. The other activity is designated 'posttransfer' editing and involves deacylation of mischarged Ala-tRNA(Pro). The misacylated Cys-tRNA(Pro) is not edited by ProRS.</text>
</comment>
<comment type="catalytic activity">
    <reaction evidence="1">
        <text>tRNA(Pro) + L-proline + ATP = L-prolyl-tRNA(Pro) + AMP + diphosphate</text>
        <dbReference type="Rhea" id="RHEA:14305"/>
        <dbReference type="Rhea" id="RHEA-COMP:9700"/>
        <dbReference type="Rhea" id="RHEA-COMP:9702"/>
        <dbReference type="ChEBI" id="CHEBI:30616"/>
        <dbReference type="ChEBI" id="CHEBI:33019"/>
        <dbReference type="ChEBI" id="CHEBI:60039"/>
        <dbReference type="ChEBI" id="CHEBI:78442"/>
        <dbReference type="ChEBI" id="CHEBI:78532"/>
        <dbReference type="ChEBI" id="CHEBI:456215"/>
        <dbReference type="EC" id="6.1.1.15"/>
    </reaction>
</comment>
<comment type="subunit">
    <text evidence="1">Homodimer.</text>
</comment>
<comment type="subcellular location">
    <subcellularLocation>
        <location evidence="1">Cytoplasm</location>
    </subcellularLocation>
</comment>
<comment type="domain">
    <text evidence="1">Consists of three domains: the N-terminal catalytic domain, the editing domain and the C-terminal anticodon-binding domain.</text>
</comment>
<comment type="similarity">
    <text evidence="1">Belongs to the class-II aminoacyl-tRNA synthetase family. ProS type 1 subfamily.</text>
</comment>
<dbReference type="EC" id="6.1.1.15" evidence="1"/>
<dbReference type="EMBL" id="CP000901">
    <property type="protein sequence ID" value="ABX85538.1"/>
    <property type="molecule type" value="Genomic_DNA"/>
</dbReference>
<dbReference type="RefSeq" id="WP_002212156.1">
    <property type="nucleotide sequence ID" value="NZ_CP009935.1"/>
</dbReference>
<dbReference type="SMR" id="A9R371"/>
<dbReference type="GeneID" id="57977492"/>
<dbReference type="KEGG" id="ypg:YpAngola_A3410"/>
<dbReference type="PATRIC" id="fig|349746.12.peg.105"/>
<dbReference type="GO" id="GO:0005829">
    <property type="term" value="C:cytosol"/>
    <property type="evidence" value="ECO:0007669"/>
    <property type="project" value="TreeGrafter"/>
</dbReference>
<dbReference type="GO" id="GO:0002161">
    <property type="term" value="F:aminoacyl-tRNA deacylase activity"/>
    <property type="evidence" value="ECO:0007669"/>
    <property type="project" value="InterPro"/>
</dbReference>
<dbReference type="GO" id="GO:0005524">
    <property type="term" value="F:ATP binding"/>
    <property type="evidence" value="ECO:0007669"/>
    <property type="project" value="UniProtKB-UniRule"/>
</dbReference>
<dbReference type="GO" id="GO:0004827">
    <property type="term" value="F:proline-tRNA ligase activity"/>
    <property type="evidence" value="ECO:0007669"/>
    <property type="project" value="UniProtKB-UniRule"/>
</dbReference>
<dbReference type="GO" id="GO:0006433">
    <property type="term" value="P:prolyl-tRNA aminoacylation"/>
    <property type="evidence" value="ECO:0007669"/>
    <property type="project" value="UniProtKB-UniRule"/>
</dbReference>
<dbReference type="CDD" id="cd04334">
    <property type="entry name" value="ProRS-INS"/>
    <property type="match status" value="1"/>
</dbReference>
<dbReference type="CDD" id="cd00861">
    <property type="entry name" value="ProRS_anticodon_short"/>
    <property type="match status" value="1"/>
</dbReference>
<dbReference type="CDD" id="cd00779">
    <property type="entry name" value="ProRS_core_prok"/>
    <property type="match status" value="1"/>
</dbReference>
<dbReference type="FunFam" id="3.30.930.10:FF:000012">
    <property type="entry name" value="Proline--tRNA ligase"/>
    <property type="match status" value="1"/>
</dbReference>
<dbReference type="FunFam" id="3.30.930.10:FF:000097">
    <property type="entry name" value="Proline--tRNA ligase"/>
    <property type="match status" value="1"/>
</dbReference>
<dbReference type="FunFam" id="3.40.50.800:FF:000006">
    <property type="entry name" value="Proline--tRNA ligase"/>
    <property type="match status" value="1"/>
</dbReference>
<dbReference type="FunFam" id="3.90.960.10:FF:000001">
    <property type="entry name" value="Proline--tRNA ligase"/>
    <property type="match status" value="1"/>
</dbReference>
<dbReference type="Gene3D" id="3.40.50.800">
    <property type="entry name" value="Anticodon-binding domain"/>
    <property type="match status" value="1"/>
</dbReference>
<dbReference type="Gene3D" id="3.30.930.10">
    <property type="entry name" value="Bira Bifunctional Protein, Domain 2"/>
    <property type="match status" value="2"/>
</dbReference>
<dbReference type="Gene3D" id="3.90.960.10">
    <property type="entry name" value="YbaK/aminoacyl-tRNA synthetase-associated domain"/>
    <property type="match status" value="1"/>
</dbReference>
<dbReference type="HAMAP" id="MF_01569">
    <property type="entry name" value="Pro_tRNA_synth_type1"/>
    <property type="match status" value="1"/>
</dbReference>
<dbReference type="InterPro" id="IPR002314">
    <property type="entry name" value="aa-tRNA-synt_IIb"/>
</dbReference>
<dbReference type="InterPro" id="IPR006195">
    <property type="entry name" value="aa-tRNA-synth_II"/>
</dbReference>
<dbReference type="InterPro" id="IPR045864">
    <property type="entry name" value="aa-tRNA-synth_II/BPL/LPL"/>
</dbReference>
<dbReference type="InterPro" id="IPR004154">
    <property type="entry name" value="Anticodon-bd"/>
</dbReference>
<dbReference type="InterPro" id="IPR036621">
    <property type="entry name" value="Anticodon-bd_dom_sf"/>
</dbReference>
<dbReference type="InterPro" id="IPR002316">
    <property type="entry name" value="Pro-tRNA-ligase_IIa"/>
</dbReference>
<dbReference type="InterPro" id="IPR004500">
    <property type="entry name" value="Pro-tRNA-synth_IIa_bac-type"/>
</dbReference>
<dbReference type="InterPro" id="IPR023717">
    <property type="entry name" value="Pro-tRNA-Synthase_IIa_type1"/>
</dbReference>
<dbReference type="InterPro" id="IPR050062">
    <property type="entry name" value="Pro-tRNA_synthetase"/>
</dbReference>
<dbReference type="InterPro" id="IPR044140">
    <property type="entry name" value="ProRS_anticodon_short"/>
</dbReference>
<dbReference type="InterPro" id="IPR033730">
    <property type="entry name" value="ProRS_core_prok"/>
</dbReference>
<dbReference type="InterPro" id="IPR036754">
    <property type="entry name" value="YbaK/aa-tRNA-synt-asso_dom_sf"/>
</dbReference>
<dbReference type="InterPro" id="IPR007214">
    <property type="entry name" value="YbaK/aa-tRNA-synth-assoc-dom"/>
</dbReference>
<dbReference type="NCBIfam" id="NF006625">
    <property type="entry name" value="PRK09194.1"/>
    <property type="match status" value="1"/>
</dbReference>
<dbReference type="NCBIfam" id="TIGR00409">
    <property type="entry name" value="proS_fam_II"/>
    <property type="match status" value="1"/>
</dbReference>
<dbReference type="PANTHER" id="PTHR42753">
    <property type="entry name" value="MITOCHONDRIAL RIBOSOME PROTEIN L39/PROLYL-TRNA LIGASE FAMILY MEMBER"/>
    <property type="match status" value="1"/>
</dbReference>
<dbReference type="PANTHER" id="PTHR42753:SF2">
    <property type="entry name" value="PROLINE--TRNA LIGASE"/>
    <property type="match status" value="1"/>
</dbReference>
<dbReference type="Pfam" id="PF03129">
    <property type="entry name" value="HGTP_anticodon"/>
    <property type="match status" value="1"/>
</dbReference>
<dbReference type="Pfam" id="PF00587">
    <property type="entry name" value="tRNA-synt_2b"/>
    <property type="match status" value="1"/>
</dbReference>
<dbReference type="Pfam" id="PF04073">
    <property type="entry name" value="tRNA_edit"/>
    <property type="match status" value="1"/>
</dbReference>
<dbReference type="PIRSF" id="PIRSF001535">
    <property type="entry name" value="ProRS_1"/>
    <property type="match status" value="1"/>
</dbReference>
<dbReference type="PRINTS" id="PR01046">
    <property type="entry name" value="TRNASYNTHPRO"/>
</dbReference>
<dbReference type="SUPFAM" id="SSF52954">
    <property type="entry name" value="Class II aaRS ABD-related"/>
    <property type="match status" value="1"/>
</dbReference>
<dbReference type="SUPFAM" id="SSF55681">
    <property type="entry name" value="Class II aaRS and biotin synthetases"/>
    <property type="match status" value="1"/>
</dbReference>
<dbReference type="SUPFAM" id="SSF55826">
    <property type="entry name" value="YbaK/ProRS associated domain"/>
    <property type="match status" value="1"/>
</dbReference>
<dbReference type="PROSITE" id="PS50862">
    <property type="entry name" value="AA_TRNA_LIGASE_II"/>
    <property type="match status" value="1"/>
</dbReference>
<proteinExistence type="inferred from homology"/>
<name>SYP_YERPG</name>
<reference key="1">
    <citation type="journal article" date="2010" name="J. Bacteriol.">
        <title>Genome sequence of the deep-rooted Yersinia pestis strain Angola reveals new insights into the evolution and pangenome of the plague bacterium.</title>
        <authorList>
            <person name="Eppinger M."/>
            <person name="Worsham P.L."/>
            <person name="Nikolich M.P."/>
            <person name="Riley D.R."/>
            <person name="Sebastian Y."/>
            <person name="Mou S."/>
            <person name="Achtman M."/>
            <person name="Lindler L.E."/>
            <person name="Ravel J."/>
        </authorList>
    </citation>
    <scope>NUCLEOTIDE SEQUENCE [LARGE SCALE GENOMIC DNA]</scope>
    <source>
        <strain>Angola</strain>
    </source>
</reference>
<sequence length="572" mass="63856">MRTSQYLLSTQKETPADAEVISHQLMLRAGMIRKLASGLYTWLPTGVRVLKKVENIVREEMNNAGAIEVSMPVVQPADLWQESGRWEQYGPELLRFVDRGERPFVLGPTHEEVITDLIRGEINSYKQLPLNFFQIQTKFRDEVRPRFGVMRAREFLMKDAYSFHTTQESLQETYDAMYTAYSKIFSRMDLNFRAVLADTGSIGGSASHEFQVLAESGEDDIVFSTGSDYAANIEFAEALAPTEPRAPATEELRIVDTPNAKTIAELVEQFKLPIEKTVKTLLVHAHEESGHKLVALLVRGDHDLNEIKAEKLPQVAKPLTFASEEEIRAAIGAGPGSLGPVNLSLPVIADHSVAVMSDFGAGANIDGKHYFGINWERDLALPLVADLRNVVEGDISPDGKGTLQIKRGIEVGHIFQLGTKYSEVMKATVQGEDGRNQVMTMGCYGIGVSRVVAAAIEQNHDDRGIIWPDAIAPFQVAILPMNMHKSFRVKELAEELYTTLRSHGIDVILDDRKERPGVMFADMELIGVPHNIVIGDRNLDSEEVEYKNRRVGEKQMIKTSEIVEFLLSQIKR</sequence>
<evidence type="ECO:0000255" key="1">
    <source>
        <dbReference type="HAMAP-Rule" id="MF_01569"/>
    </source>
</evidence>
<gene>
    <name evidence="1" type="primary">proS</name>
    <name type="ordered locus">YpAngola_A3410</name>
</gene>
<feature type="chain" id="PRO_1000199445" description="Proline--tRNA ligase">
    <location>
        <begin position="1"/>
        <end position="572"/>
    </location>
</feature>
<accession>A9R371</accession>
<keyword id="KW-0030">Aminoacyl-tRNA synthetase</keyword>
<keyword id="KW-0067">ATP-binding</keyword>
<keyword id="KW-0963">Cytoplasm</keyword>
<keyword id="KW-0436">Ligase</keyword>
<keyword id="KW-0547">Nucleotide-binding</keyword>
<keyword id="KW-0648">Protein biosynthesis</keyword>
<protein>
    <recommendedName>
        <fullName evidence="1">Proline--tRNA ligase</fullName>
        <ecNumber evidence="1">6.1.1.15</ecNumber>
    </recommendedName>
    <alternativeName>
        <fullName evidence="1">Prolyl-tRNA synthetase</fullName>
        <shortName evidence="1">ProRS</shortName>
    </alternativeName>
</protein>